<comment type="cofactor">
    <cofactor evidence="2">
        <name>pyridoxal 5'-phosphate</name>
        <dbReference type="ChEBI" id="CHEBI:597326"/>
    </cofactor>
</comment>
<comment type="similarity">
    <text evidence="2">Belongs to the class-III pyridoxal-phosphate-dependent aminotransferase family.</text>
</comment>
<proteinExistence type="inferred from homology"/>
<name>Y4UB_SINFN</name>
<feature type="chain" id="PRO_0000120539" description="Uncharacterized aminotransferase y4uB">
    <location>
        <begin position="1"/>
        <end position="467"/>
    </location>
</feature>
<feature type="modified residue" description="N6-(pyridoxal phosphate)lysine" evidence="1">
    <location>
        <position position="290"/>
    </location>
</feature>
<evidence type="ECO:0000250" key="1"/>
<evidence type="ECO:0000305" key="2"/>
<gene>
    <name type="ordered locus">NGR_a01380</name>
    <name type="ORF">y4uB</name>
</gene>
<dbReference type="EC" id="2.6.1.-"/>
<dbReference type="EMBL" id="Z68203">
    <property type="protein sequence ID" value="CAA92403.1"/>
    <property type="molecule type" value="Genomic_DNA"/>
</dbReference>
<dbReference type="EMBL" id="U00090">
    <property type="protein sequence ID" value="AAB91874.1"/>
    <property type="molecule type" value="Genomic_DNA"/>
</dbReference>
<dbReference type="RefSeq" id="NP_444087.1">
    <property type="nucleotide sequence ID" value="NC_000914.2"/>
</dbReference>
<dbReference type="RefSeq" id="WP_010875176.1">
    <property type="nucleotide sequence ID" value="NC_000914.2"/>
</dbReference>
<dbReference type="SMR" id="Q53196"/>
<dbReference type="KEGG" id="rhi:NGR_a01380"/>
<dbReference type="PATRIC" id="fig|394.7.peg.124"/>
<dbReference type="eggNOG" id="COG0161">
    <property type="taxonomic scope" value="Bacteria"/>
</dbReference>
<dbReference type="HOGENOM" id="CLU_016922_4_1_5"/>
<dbReference type="OrthoDB" id="9801834at2"/>
<dbReference type="Proteomes" id="UP000001054">
    <property type="component" value="Plasmid pNGR234a"/>
</dbReference>
<dbReference type="GO" id="GO:0030170">
    <property type="term" value="F:pyridoxal phosphate binding"/>
    <property type="evidence" value="ECO:0007669"/>
    <property type="project" value="InterPro"/>
</dbReference>
<dbReference type="GO" id="GO:0008483">
    <property type="term" value="F:transaminase activity"/>
    <property type="evidence" value="ECO:0007669"/>
    <property type="project" value="UniProtKB-KW"/>
</dbReference>
<dbReference type="CDD" id="cd00610">
    <property type="entry name" value="OAT_like"/>
    <property type="match status" value="1"/>
</dbReference>
<dbReference type="FunFam" id="3.40.640.10:FF:000014">
    <property type="entry name" value="Adenosylmethionine-8-amino-7-oxononanoate aminotransferase, probable"/>
    <property type="match status" value="1"/>
</dbReference>
<dbReference type="Gene3D" id="3.90.1150.10">
    <property type="entry name" value="Aspartate Aminotransferase, domain 1"/>
    <property type="match status" value="1"/>
</dbReference>
<dbReference type="Gene3D" id="3.40.640.10">
    <property type="entry name" value="Type I PLP-dependent aspartate aminotransferase-like (Major domain)"/>
    <property type="match status" value="1"/>
</dbReference>
<dbReference type="InterPro" id="IPR005814">
    <property type="entry name" value="Aminotrans_3"/>
</dbReference>
<dbReference type="InterPro" id="IPR049704">
    <property type="entry name" value="Aminotrans_3_PPA_site"/>
</dbReference>
<dbReference type="InterPro" id="IPR015424">
    <property type="entry name" value="PyrdxlP-dep_Trfase"/>
</dbReference>
<dbReference type="InterPro" id="IPR015421">
    <property type="entry name" value="PyrdxlP-dep_Trfase_major"/>
</dbReference>
<dbReference type="InterPro" id="IPR015422">
    <property type="entry name" value="PyrdxlP-dep_Trfase_small"/>
</dbReference>
<dbReference type="NCBIfam" id="NF004767">
    <property type="entry name" value="PRK06105.1"/>
    <property type="match status" value="1"/>
</dbReference>
<dbReference type="NCBIfam" id="NF005684">
    <property type="entry name" value="PRK07482.1"/>
    <property type="match status" value="1"/>
</dbReference>
<dbReference type="PANTHER" id="PTHR43094">
    <property type="entry name" value="AMINOTRANSFERASE"/>
    <property type="match status" value="1"/>
</dbReference>
<dbReference type="PANTHER" id="PTHR43094:SF1">
    <property type="entry name" value="AMINOTRANSFERASE CLASS-III"/>
    <property type="match status" value="1"/>
</dbReference>
<dbReference type="Pfam" id="PF00202">
    <property type="entry name" value="Aminotran_3"/>
    <property type="match status" value="1"/>
</dbReference>
<dbReference type="PIRSF" id="PIRSF000521">
    <property type="entry name" value="Transaminase_4ab_Lys_Orn"/>
    <property type="match status" value="1"/>
</dbReference>
<dbReference type="SUPFAM" id="SSF53383">
    <property type="entry name" value="PLP-dependent transferases"/>
    <property type="match status" value="1"/>
</dbReference>
<dbReference type="PROSITE" id="PS00600">
    <property type="entry name" value="AA_TRANSFER_CLASS_3"/>
    <property type="match status" value="1"/>
</dbReference>
<geneLocation type="plasmid">
    <name>sym pNGR234a</name>
</geneLocation>
<accession>Q53196</accession>
<organism>
    <name type="scientific">Sinorhizobium fredii (strain NBRC 101917 / NGR234)</name>
    <dbReference type="NCBI Taxonomy" id="394"/>
    <lineage>
        <taxon>Bacteria</taxon>
        <taxon>Pseudomonadati</taxon>
        <taxon>Pseudomonadota</taxon>
        <taxon>Alphaproteobacteria</taxon>
        <taxon>Hyphomicrobiales</taxon>
        <taxon>Rhizobiaceae</taxon>
        <taxon>Sinorhizobium/Ensifer group</taxon>
        <taxon>Sinorhizobium</taxon>
    </lineage>
</organism>
<protein>
    <recommendedName>
        <fullName>Uncharacterized aminotransferase y4uB</fullName>
        <ecNumber>2.6.1.-</ecNumber>
    </recommendedName>
</protein>
<keyword id="KW-0032">Aminotransferase</keyword>
<keyword id="KW-0614">Plasmid</keyword>
<keyword id="KW-0663">Pyridoxal phosphate</keyword>
<keyword id="KW-1185">Reference proteome</keyword>
<keyword id="KW-0808">Transferase</keyword>
<sequence length="467" mass="51005">MTIDIKDISEKDRNTVLHPFTQLKDFATGKLREPTIVETGKGIRIQDARGNQLIDGFAGLYCVNVGYGRTEVAEAISRQAYRLAYYHSYAAHTTDELAILSDRLVKMAPGKMSKVFYGMSGSDANETQAKLVWYYNNLRGKPTKKKIISRERGYHGCSVVSGSMTGMSFYHDHMDLPLPQICHTGVPHHYWGANPGETEREFSARRAAELDEMIETLGPDNVGAFIAEPVLGTGGITPPPEGYWEAIQAVLKKHDVLLIADEVITGFGRTGSMFGSQHYGIEPDLITVAKGLTSAYFPLSASIVGEKVYKVLEDGADRVGAFSHGYTYSGHPIGAAAANAVLDIVEKEDLPGNAREVGGYFQAQLKEKFAQLPIVGEVRGVGLMGAIEFVGDRENKKRFDPLLKVGARVSKAARDRGLIARAMPHGDILGFAPPLVTTKEEVDEIVAMAEKAVRSVMDELVRDGQKL</sequence>
<reference key="1">
    <citation type="journal article" date="1996" name="Genome Res.">
        <title>Sequencing the 500-kb GC-rich symbiotic replicon of Rhizobium sp. NGR234 using dye terminators and a thermostable 'sequenase': a beginning.</title>
        <authorList>
            <person name="Freiberg C."/>
            <person name="Perret X."/>
            <person name="Broughton W.J."/>
            <person name="Rosenthal A."/>
        </authorList>
    </citation>
    <scope>NUCLEOTIDE SEQUENCE [GENOMIC DNA]</scope>
</reference>
<reference key="2">
    <citation type="journal article" date="1997" name="Nature">
        <title>Molecular basis of symbiosis between Rhizobium and legumes.</title>
        <authorList>
            <person name="Freiberg C.A."/>
            <person name="Fellay R."/>
            <person name="Bairoch A."/>
            <person name="Broughton W.J."/>
            <person name="Rosenthal A."/>
            <person name="Perret X."/>
        </authorList>
    </citation>
    <scope>NUCLEOTIDE SEQUENCE [LARGE SCALE GENOMIC DNA]</scope>
    <source>
        <strain>NBRC 101917 / NGR234</strain>
    </source>
</reference>
<reference key="3">
    <citation type="journal article" date="2009" name="Appl. Environ. Microbiol.">
        <title>Rhizobium sp. strain NGR234 possesses a remarkable number of secretion systems.</title>
        <authorList>
            <person name="Schmeisser C."/>
            <person name="Liesegang H."/>
            <person name="Krysciak D."/>
            <person name="Bakkou N."/>
            <person name="Le Quere A."/>
            <person name="Wollherr A."/>
            <person name="Heinemeyer I."/>
            <person name="Morgenstern B."/>
            <person name="Pommerening-Roeser A."/>
            <person name="Flores M."/>
            <person name="Palacios R."/>
            <person name="Brenner S."/>
            <person name="Gottschalk G."/>
            <person name="Schmitz R.A."/>
            <person name="Broughton W.J."/>
            <person name="Perret X."/>
            <person name="Strittmatter A.W."/>
            <person name="Streit W.R."/>
        </authorList>
    </citation>
    <scope>NUCLEOTIDE SEQUENCE [LARGE SCALE GENOMIC DNA]</scope>
    <source>
        <strain>NBRC 101917 / NGR234</strain>
    </source>
</reference>